<accession>C1CSU8</accession>
<reference key="1">
    <citation type="journal article" date="2010" name="Genome Biol.">
        <title>Structure and dynamics of the pan-genome of Streptococcus pneumoniae and closely related species.</title>
        <authorList>
            <person name="Donati C."/>
            <person name="Hiller N.L."/>
            <person name="Tettelin H."/>
            <person name="Muzzi A."/>
            <person name="Croucher N.J."/>
            <person name="Angiuoli S.V."/>
            <person name="Oggioni M."/>
            <person name="Dunning Hotopp J.C."/>
            <person name="Hu F.Z."/>
            <person name="Riley D.R."/>
            <person name="Covacci A."/>
            <person name="Mitchell T.J."/>
            <person name="Bentley S.D."/>
            <person name="Kilian M."/>
            <person name="Ehrlich G.D."/>
            <person name="Rappuoli R."/>
            <person name="Moxon E.R."/>
            <person name="Masignani V."/>
        </authorList>
    </citation>
    <scope>NUCLEOTIDE SEQUENCE [LARGE SCALE GENOMIC DNA]</scope>
    <source>
        <strain>Taiwan19F-14</strain>
    </source>
</reference>
<sequence length="232" mass="25450">MPQISKEALIEQIKDGIIVSCQALPHEPLYTEAGGVIPLLVKAAEQGGAVGIRANSVRDIKEIKEVTKLPIIGIIKRDYPPQEPFITATMKEVDELAELDIEVIALDCTKRERYDGLEIQEFIRQVKEKYPNQLLMADTSIFEEGLAAVEAGIDFVGTTLSGYTSYSPKVDGPDFELIKKLCDAGVDVIAEGKIHTPEQAKQILEYGVRGIVVGGAITRPKEITERFVASLK</sequence>
<feature type="chain" id="PRO_1000164997" description="Putative N-acetylmannosamine-6-phosphate 2-epimerase">
    <location>
        <begin position="1"/>
        <end position="232"/>
    </location>
</feature>
<protein>
    <recommendedName>
        <fullName evidence="1">Putative N-acetylmannosamine-6-phosphate 2-epimerase</fullName>
        <ecNumber evidence="1">5.1.3.9</ecNumber>
    </recommendedName>
    <alternativeName>
        <fullName evidence="1">ManNAc-6-P epimerase</fullName>
    </alternativeName>
</protein>
<organism>
    <name type="scientific">Streptococcus pneumoniae (strain Taiwan19F-14)</name>
    <dbReference type="NCBI Taxonomy" id="487213"/>
    <lineage>
        <taxon>Bacteria</taxon>
        <taxon>Bacillati</taxon>
        <taxon>Bacillota</taxon>
        <taxon>Bacilli</taxon>
        <taxon>Lactobacillales</taxon>
        <taxon>Streptococcaceae</taxon>
        <taxon>Streptococcus</taxon>
    </lineage>
</organism>
<keyword id="KW-0119">Carbohydrate metabolism</keyword>
<keyword id="KW-0413">Isomerase</keyword>
<dbReference type="EC" id="5.1.3.9" evidence="1"/>
<dbReference type="EMBL" id="CP000921">
    <property type="protein sequence ID" value="ACO22449.1"/>
    <property type="molecule type" value="Genomic_DNA"/>
</dbReference>
<dbReference type="RefSeq" id="WP_001135651.1">
    <property type="nucleotide sequence ID" value="NC_012469.1"/>
</dbReference>
<dbReference type="SMR" id="C1CSU8"/>
<dbReference type="KEGG" id="snt:SPT_1623"/>
<dbReference type="HOGENOM" id="CLU_086300_1_0_9"/>
<dbReference type="UniPathway" id="UPA00629">
    <property type="reaction ID" value="UER00682"/>
</dbReference>
<dbReference type="GO" id="GO:0005829">
    <property type="term" value="C:cytosol"/>
    <property type="evidence" value="ECO:0007669"/>
    <property type="project" value="TreeGrafter"/>
</dbReference>
<dbReference type="GO" id="GO:0047465">
    <property type="term" value="F:N-acylglucosamine-6-phosphate 2-epimerase activity"/>
    <property type="evidence" value="ECO:0007669"/>
    <property type="project" value="UniProtKB-EC"/>
</dbReference>
<dbReference type="GO" id="GO:0005975">
    <property type="term" value="P:carbohydrate metabolic process"/>
    <property type="evidence" value="ECO:0007669"/>
    <property type="project" value="UniProtKB-UniRule"/>
</dbReference>
<dbReference type="GO" id="GO:0006053">
    <property type="term" value="P:N-acetylmannosamine catabolic process"/>
    <property type="evidence" value="ECO:0007669"/>
    <property type="project" value="TreeGrafter"/>
</dbReference>
<dbReference type="GO" id="GO:0019262">
    <property type="term" value="P:N-acetylneuraminate catabolic process"/>
    <property type="evidence" value="ECO:0007669"/>
    <property type="project" value="UniProtKB-UniRule"/>
</dbReference>
<dbReference type="CDD" id="cd04729">
    <property type="entry name" value="NanE"/>
    <property type="match status" value="1"/>
</dbReference>
<dbReference type="FunFam" id="3.20.20.70:FF:000035">
    <property type="entry name" value="Putative N-acetylmannosamine-6-phosphate 2-epimerase"/>
    <property type="match status" value="1"/>
</dbReference>
<dbReference type="Gene3D" id="3.20.20.70">
    <property type="entry name" value="Aldolase class I"/>
    <property type="match status" value="1"/>
</dbReference>
<dbReference type="HAMAP" id="MF_01235">
    <property type="entry name" value="ManNAc6P_epimer"/>
    <property type="match status" value="1"/>
</dbReference>
<dbReference type="InterPro" id="IPR013785">
    <property type="entry name" value="Aldolase_TIM"/>
</dbReference>
<dbReference type="InterPro" id="IPR007260">
    <property type="entry name" value="NanE"/>
</dbReference>
<dbReference type="InterPro" id="IPR011060">
    <property type="entry name" value="RibuloseP-bd_barrel"/>
</dbReference>
<dbReference type="NCBIfam" id="NF002231">
    <property type="entry name" value="PRK01130.1"/>
    <property type="match status" value="1"/>
</dbReference>
<dbReference type="PANTHER" id="PTHR36204">
    <property type="entry name" value="N-ACETYLMANNOSAMINE-6-PHOSPHATE 2-EPIMERASE-RELATED"/>
    <property type="match status" value="1"/>
</dbReference>
<dbReference type="PANTHER" id="PTHR36204:SF1">
    <property type="entry name" value="N-ACETYLMANNOSAMINE-6-PHOSPHATE 2-EPIMERASE-RELATED"/>
    <property type="match status" value="1"/>
</dbReference>
<dbReference type="Pfam" id="PF04131">
    <property type="entry name" value="NanE"/>
    <property type="match status" value="1"/>
</dbReference>
<dbReference type="SUPFAM" id="SSF51366">
    <property type="entry name" value="Ribulose-phoshate binding barrel"/>
    <property type="match status" value="1"/>
</dbReference>
<evidence type="ECO:0000255" key="1">
    <source>
        <dbReference type="HAMAP-Rule" id="MF_01235"/>
    </source>
</evidence>
<gene>
    <name evidence="1" type="primary">nanE</name>
    <name type="ordered locus">SPT_1623</name>
</gene>
<proteinExistence type="inferred from homology"/>
<comment type="function">
    <text evidence="1">Converts N-acetylmannosamine-6-phosphate (ManNAc-6-P) to N-acetylglucosamine-6-phosphate (GlcNAc-6-P).</text>
</comment>
<comment type="catalytic activity">
    <reaction evidence="1">
        <text>an N-acyl-D-glucosamine 6-phosphate = an N-acyl-D-mannosamine 6-phosphate</text>
        <dbReference type="Rhea" id="RHEA:23932"/>
        <dbReference type="ChEBI" id="CHEBI:57599"/>
        <dbReference type="ChEBI" id="CHEBI:57666"/>
        <dbReference type="EC" id="5.1.3.9"/>
    </reaction>
</comment>
<comment type="pathway">
    <text evidence="1">Amino-sugar metabolism; N-acetylneuraminate degradation; D-fructose 6-phosphate from N-acetylneuraminate: step 3/5.</text>
</comment>
<comment type="similarity">
    <text evidence="1">Belongs to the NanE family.</text>
</comment>
<name>NANE_STRZT</name>